<feature type="chain" id="PRO_0000046834" description="pH-response transcription factor pacC/RIM101">
    <location>
        <begin position="1"/>
        <end position="618"/>
    </location>
</feature>
<feature type="zinc finger region" description="C2H2-type 1" evidence="2">
    <location>
        <begin position="62"/>
        <end position="87"/>
    </location>
</feature>
<feature type="zinc finger region" description="C2H2-type 2" evidence="2">
    <location>
        <begin position="98"/>
        <end position="122"/>
    </location>
</feature>
<feature type="zinc finger region" description="C2H2-type 3" evidence="2">
    <location>
        <begin position="128"/>
        <end position="150"/>
    </location>
</feature>
<feature type="region of interest" description="Disordered" evidence="3">
    <location>
        <begin position="1"/>
        <end position="59"/>
    </location>
</feature>
<feature type="region of interest" description="Disordered" evidence="3">
    <location>
        <begin position="144"/>
        <end position="180"/>
    </location>
</feature>
<feature type="region of interest" description="Disordered" evidence="3">
    <location>
        <begin position="375"/>
        <end position="396"/>
    </location>
</feature>
<feature type="region of interest" description="Disordered" evidence="3">
    <location>
        <begin position="413"/>
        <end position="540"/>
    </location>
</feature>
<feature type="region of interest" description="Disordered" evidence="3">
    <location>
        <begin position="571"/>
        <end position="618"/>
    </location>
</feature>
<feature type="short sequence motif" description="YPX[LI] motif 1">
    <location>
        <begin position="456"/>
        <end position="459"/>
    </location>
</feature>
<feature type="short sequence motif" description="YPX[LI] motif 2">
    <location>
        <begin position="610"/>
        <end position="613"/>
    </location>
</feature>
<feature type="compositionally biased region" description="Low complexity" evidence="3">
    <location>
        <begin position="13"/>
        <end position="58"/>
    </location>
</feature>
<feature type="compositionally biased region" description="Basic and acidic residues" evidence="3">
    <location>
        <begin position="144"/>
        <end position="155"/>
    </location>
</feature>
<feature type="compositionally biased region" description="Low complexity" evidence="3">
    <location>
        <begin position="422"/>
        <end position="446"/>
    </location>
</feature>
<feature type="compositionally biased region" description="Polar residues" evidence="3">
    <location>
        <begin position="447"/>
        <end position="465"/>
    </location>
</feature>
<feature type="compositionally biased region" description="Polar residues" evidence="3">
    <location>
        <begin position="511"/>
        <end position="522"/>
    </location>
</feature>
<feature type="compositionally biased region" description="Basic and acidic residues" evidence="3">
    <location>
        <begin position="571"/>
        <end position="590"/>
    </location>
</feature>
<name>PACC_FUSFU</name>
<dbReference type="EMBL" id="AJ514259">
    <property type="protein sequence ID" value="CAD55803.1"/>
    <property type="molecule type" value="Genomic_DNA"/>
</dbReference>
<dbReference type="eggNOG" id="KOG1721">
    <property type="taxonomic scope" value="Eukaryota"/>
</dbReference>
<dbReference type="GO" id="GO:0005737">
    <property type="term" value="C:cytoplasm"/>
    <property type="evidence" value="ECO:0007669"/>
    <property type="project" value="UniProtKB-SubCell"/>
</dbReference>
<dbReference type="GO" id="GO:0005634">
    <property type="term" value="C:nucleus"/>
    <property type="evidence" value="ECO:0007669"/>
    <property type="project" value="UniProtKB-SubCell"/>
</dbReference>
<dbReference type="GO" id="GO:0003677">
    <property type="term" value="F:DNA binding"/>
    <property type="evidence" value="ECO:0007669"/>
    <property type="project" value="UniProtKB-KW"/>
</dbReference>
<dbReference type="GO" id="GO:0008270">
    <property type="term" value="F:zinc ion binding"/>
    <property type="evidence" value="ECO:0007669"/>
    <property type="project" value="UniProtKB-KW"/>
</dbReference>
<dbReference type="GO" id="GO:0045944">
    <property type="term" value="P:positive regulation of transcription by RNA polymerase II"/>
    <property type="evidence" value="ECO:0007669"/>
    <property type="project" value="TreeGrafter"/>
</dbReference>
<dbReference type="FunFam" id="3.30.160.60:FF:000458">
    <property type="entry name" value="pH-response transcription factor pacC/RIM101"/>
    <property type="match status" value="1"/>
</dbReference>
<dbReference type="FunFam" id="3.30.160.60:FF:001875">
    <property type="entry name" value="pH-response transcription factor pacC/RIM101"/>
    <property type="match status" value="1"/>
</dbReference>
<dbReference type="Gene3D" id="3.30.160.60">
    <property type="entry name" value="Classic Zinc Finger"/>
    <property type="match status" value="2"/>
</dbReference>
<dbReference type="InterPro" id="IPR050806">
    <property type="entry name" value="pacC/RIM101"/>
</dbReference>
<dbReference type="InterPro" id="IPR036236">
    <property type="entry name" value="Znf_C2H2_sf"/>
</dbReference>
<dbReference type="InterPro" id="IPR013087">
    <property type="entry name" value="Znf_C2H2_type"/>
</dbReference>
<dbReference type="PANTHER" id="PTHR47257">
    <property type="entry name" value="PH-RESPONSE TRANSCRIPTION FACTOR PACC/RIM101"/>
    <property type="match status" value="1"/>
</dbReference>
<dbReference type="PANTHER" id="PTHR47257:SF1">
    <property type="entry name" value="PH-RESPONSE TRANSCRIPTION FACTOR PACC_RIM101"/>
    <property type="match status" value="1"/>
</dbReference>
<dbReference type="Pfam" id="PF00096">
    <property type="entry name" value="zf-C2H2"/>
    <property type="match status" value="1"/>
</dbReference>
<dbReference type="SMART" id="SM00355">
    <property type="entry name" value="ZnF_C2H2"/>
    <property type="match status" value="3"/>
</dbReference>
<dbReference type="SUPFAM" id="SSF57667">
    <property type="entry name" value="beta-beta-alpha zinc fingers"/>
    <property type="match status" value="2"/>
</dbReference>
<dbReference type="PROSITE" id="PS00028">
    <property type="entry name" value="ZINC_FINGER_C2H2_1"/>
    <property type="match status" value="2"/>
</dbReference>
<dbReference type="PROSITE" id="PS50157">
    <property type="entry name" value="ZINC_FINGER_C2H2_2"/>
    <property type="match status" value="3"/>
</dbReference>
<comment type="function">
    <text evidence="1">Transcription factor that mediates regulation of both acid- and alkaline-expressed genes in response to ambient pH. At alkaline ambient pH, activates transcription of alkaline-expressed genes (including pacC itself) and represses transcription of acid-expressed genes (By similarity).</text>
</comment>
<comment type="subcellular location">
    <subcellularLocation>
        <location evidence="1">Cytoplasm</location>
    </subcellularLocation>
    <subcellularLocation>
        <location evidence="1">Nucleus</location>
    </subcellularLocation>
</comment>
<comment type="PTM">
    <text evidence="1">Activated by C-terminal proteolytic cleavage by signaling protease (probably palB/RIM13) at neutral to alkaline ambient pH.</text>
</comment>
<comment type="similarity">
    <text evidence="4">Belongs to the pacC/RIM101 family.</text>
</comment>
<evidence type="ECO:0000250" key="1"/>
<evidence type="ECO:0000255" key="2">
    <source>
        <dbReference type="PROSITE-ProRule" id="PRU00042"/>
    </source>
</evidence>
<evidence type="ECO:0000256" key="3">
    <source>
        <dbReference type="SAM" id="MobiDB-lite"/>
    </source>
</evidence>
<evidence type="ECO:0000305" key="4"/>
<protein>
    <recommendedName>
        <fullName>pH-response transcription factor pacC/RIM101</fullName>
    </recommendedName>
</protein>
<keyword id="KW-0010">Activator</keyword>
<keyword id="KW-0963">Cytoplasm</keyword>
<keyword id="KW-0238">DNA-binding</keyword>
<keyword id="KW-0479">Metal-binding</keyword>
<keyword id="KW-0539">Nucleus</keyword>
<keyword id="KW-0677">Repeat</keyword>
<keyword id="KW-0678">Repressor</keyword>
<keyword id="KW-0804">Transcription</keyword>
<keyword id="KW-0805">Transcription regulation</keyword>
<keyword id="KW-0862">Zinc</keyword>
<keyword id="KW-0863">Zinc-finger</keyword>
<gene>
    <name type="primary">pacC</name>
</gene>
<reference key="1">
    <citation type="submission" date="2002-10" db="EMBL/GenBank/DDBJ databases">
        <title>Cloning and functional analysis of the Gibberella fujikuroi PACC-encoding gene.</title>
        <authorList>
            <person name="Tudzynski B."/>
            <person name="Selle A."/>
        </authorList>
    </citation>
    <scope>NUCLEOTIDE SEQUENCE [GENOMIC DNA]</scope>
    <source>
        <strain>m567</strain>
    </source>
</reference>
<proteinExistence type="inferred from homology"/>
<organism>
    <name type="scientific">Fusarium fujikuroi</name>
    <name type="common">Bakanae and foot rot disease fungus</name>
    <name type="synonym">Gibberella fujikuroi</name>
    <dbReference type="NCBI Taxonomy" id="5127"/>
    <lineage>
        <taxon>Eukaryota</taxon>
        <taxon>Fungi</taxon>
        <taxon>Dikarya</taxon>
        <taxon>Ascomycota</taxon>
        <taxon>Pezizomycotina</taxon>
        <taxon>Sordariomycetes</taxon>
        <taxon>Hypocreomycetidae</taxon>
        <taxon>Hypocreales</taxon>
        <taxon>Nectriaceae</taxon>
        <taxon>Fusarium</taxon>
        <taxon>Fusarium fujikuroi species complex</taxon>
    </lineage>
</organism>
<accession>Q8J1U9</accession>
<sequence length="618" mass="66994">MSPPAPEQKPQLQQQQQQQGSSSGDSSSGSANDSKSVTPAPSATSNTSQSSTAPSTSSDDNLICRWNACNQKFPAPEALYEHICERHVGRKSTNNLNLTCQWNSCRTTTVKRDHITSHIRVHVPLKPHKCDFCGKSFKRPQDLKKHVKTHADDSVLVRPSQDPQGGLNYRPQPPKGMSHLDSSPRLYYDHTGQMRTNAAAFAHQAGHPSGGYYAPQPSTNYGLYFNQPPINNARTEHLGYSAAAGGYDRKRTYDMVDDFFGSAKRRQIDPSSYAQIGRSLMPLHGNLSVPNGPMTATEQYMPQPAPAPVHAGPTPSQNPLAQQYYLPMPSARTQKDLIHIDTILGQMQDTIYENANHATAGVHIHHAENGFNGYRNTPSPPTSHRSPTGMHVGADGYQPVSAASMASPLTAISSTGTPAVTPPSSSMSYTSGHSPSPSSSAMSPQSRHGSTASVMYPTLPTSLPAVSQGFGHSATTTLGPSFDGSERRRYSGGMLQRARAGPLPLPREDTSGASTPKASESALSVGSPSSESDVSDATREREEQYDRWLENMRVIETLREYVRGRLERKEFVEDNESPRSSHSDAMDVDPKSPQAPPRELGTPREGSSLYPILRMPGA</sequence>